<sequence length="269" mass="30061">MAVGKNKGVSKGGKKGSKKKVVDPFTRKDWYDVKAPNMFKNRQVGKTLVNRTQGTRIASDGLKGRVFEVSLADLQNEQDAERSFRKFKLIAESVNGRDVLCNFHGMDLTTDKLRSMVKKWQTLIECSVDVKTTDGYLLRVFCIGFTIKDSVSQRKTCYAQHSQIKNIRQRMTTIIKREIINSDLKGVVEKLLPDSIAKDIEKACQVVYPLHDVFIRKVKVLKKPRFDLSSLLELHGDGGGKAAEVSTGAASGVVVDRPEGYEPPVQESV</sequence>
<proteinExistence type="evidence at transcript level"/>
<protein>
    <recommendedName>
        <fullName evidence="1">Small ribosomal subunit protein eS1</fullName>
    </recommendedName>
    <alternativeName>
        <fullName evidence="3">40S ribosomal protein S3a</fullName>
    </alternativeName>
</protein>
<reference key="1">
    <citation type="journal article" date="2009" name="BMC Genomics">
        <title>The salivary gland transcriptome of the neotropical malaria vector Anopheles darlingi reveals accelerated evolution of genes relevant to hematophagy.</title>
        <authorList>
            <person name="Calvo E."/>
            <person name="Pham V.M."/>
            <person name="Marinotti O."/>
            <person name="Andersen J.F."/>
            <person name="Ribeiro J.M.C."/>
        </authorList>
    </citation>
    <scope>NUCLEOTIDE SEQUENCE [LARGE SCALE MRNA]</scope>
    <source>
        <tissue>Salivary gland</tissue>
    </source>
</reference>
<name>RS3A_ANODA</name>
<dbReference type="EMBL" id="EU934301">
    <property type="protein sequence ID" value="ACI30079.1"/>
    <property type="molecule type" value="mRNA"/>
</dbReference>
<dbReference type="RefSeq" id="XP_049536706.1">
    <property type="nucleotide sequence ID" value="XM_049680749.1"/>
</dbReference>
<dbReference type="SMR" id="B6DDU1"/>
<dbReference type="EnsemblMetazoa" id="ADAC002062-RA">
    <property type="protein sequence ID" value="ADAC002062-PA"/>
    <property type="gene ID" value="ADAC002062"/>
</dbReference>
<dbReference type="GeneID" id="125951740"/>
<dbReference type="VEuPathDB" id="VectorBase:ADAC002062"/>
<dbReference type="VEuPathDB" id="VectorBase:ADAR2_002728"/>
<dbReference type="eggNOG" id="KOG1628">
    <property type="taxonomic scope" value="Eukaryota"/>
</dbReference>
<dbReference type="HOGENOM" id="CLU_062507_0_1_1"/>
<dbReference type="OMA" id="TRFKGHE"/>
<dbReference type="OrthoDB" id="9834376at2759"/>
<dbReference type="Proteomes" id="UP000000673">
    <property type="component" value="Unassembled WGS sequence"/>
</dbReference>
<dbReference type="GO" id="GO:0022627">
    <property type="term" value="C:cytosolic small ribosomal subunit"/>
    <property type="evidence" value="ECO:0007669"/>
    <property type="project" value="UniProtKB-UniRule"/>
</dbReference>
<dbReference type="GO" id="GO:0003735">
    <property type="term" value="F:structural constituent of ribosome"/>
    <property type="evidence" value="ECO:0007669"/>
    <property type="project" value="UniProtKB-UniRule"/>
</dbReference>
<dbReference type="GO" id="GO:0006412">
    <property type="term" value="P:translation"/>
    <property type="evidence" value="ECO:0007669"/>
    <property type="project" value="UniProtKB-UniRule"/>
</dbReference>
<dbReference type="HAMAP" id="MF_03122">
    <property type="entry name" value="Ribosomal_eS1_euk"/>
    <property type="match status" value="1"/>
</dbReference>
<dbReference type="InterPro" id="IPR001593">
    <property type="entry name" value="Ribosomal_eS1"/>
</dbReference>
<dbReference type="InterPro" id="IPR018281">
    <property type="entry name" value="Ribosomal_eS1_CS"/>
</dbReference>
<dbReference type="InterPro" id="IPR027500">
    <property type="entry name" value="Ribosomal_eS1_euk"/>
</dbReference>
<dbReference type="PANTHER" id="PTHR11830">
    <property type="entry name" value="40S RIBOSOMAL PROTEIN S3A"/>
    <property type="match status" value="1"/>
</dbReference>
<dbReference type="Pfam" id="PF01015">
    <property type="entry name" value="Ribosomal_S3Ae"/>
    <property type="match status" value="1"/>
</dbReference>
<dbReference type="SMART" id="SM01397">
    <property type="entry name" value="Ribosomal_S3Ae"/>
    <property type="match status" value="1"/>
</dbReference>
<dbReference type="PROSITE" id="PS01191">
    <property type="entry name" value="RIBOSOMAL_S3AE"/>
    <property type="match status" value="1"/>
</dbReference>
<keyword id="KW-0963">Cytoplasm</keyword>
<keyword id="KW-1185">Reference proteome</keyword>
<keyword id="KW-0687">Ribonucleoprotein</keyword>
<keyword id="KW-0689">Ribosomal protein</keyword>
<evidence type="ECO:0000255" key="1">
    <source>
        <dbReference type="HAMAP-Rule" id="MF_03122"/>
    </source>
</evidence>
<evidence type="ECO:0000256" key="2">
    <source>
        <dbReference type="SAM" id="MobiDB-lite"/>
    </source>
</evidence>
<evidence type="ECO:0000305" key="3"/>
<organism>
    <name type="scientific">Anopheles darlingi</name>
    <name type="common">Mosquito</name>
    <dbReference type="NCBI Taxonomy" id="43151"/>
    <lineage>
        <taxon>Eukaryota</taxon>
        <taxon>Metazoa</taxon>
        <taxon>Ecdysozoa</taxon>
        <taxon>Arthropoda</taxon>
        <taxon>Hexapoda</taxon>
        <taxon>Insecta</taxon>
        <taxon>Pterygota</taxon>
        <taxon>Neoptera</taxon>
        <taxon>Endopterygota</taxon>
        <taxon>Diptera</taxon>
        <taxon>Nematocera</taxon>
        <taxon>Culicoidea</taxon>
        <taxon>Culicidae</taxon>
        <taxon>Anophelinae</taxon>
        <taxon>Anopheles</taxon>
    </lineage>
</organism>
<comment type="subunit">
    <text evidence="1">Component of the small ribosomal subunit. Mature ribosomes consist of a small (40S) and a large (60S) subunit. The 40S subunit contains about 33 different proteins and 1 molecule of RNA (18S). The 60S subunit contains about 49 different proteins and 3 molecules of RNA (28S, 5.8S and 5S).</text>
</comment>
<comment type="subcellular location">
    <subcellularLocation>
        <location evidence="1">Cytoplasm</location>
    </subcellularLocation>
</comment>
<comment type="similarity">
    <text evidence="1">Belongs to the eukaryotic ribosomal protein eS1 family.</text>
</comment>
<feature type="initiator methionine" description="Removed" evidence="1">
    <location>
        <position position="1"/>
    </location>
</feature>
<feature type="chain" id="PRO_0000389300" description="Small ribosomal subunit protein eS1">
    <location>
        <begin position="2"/>
        <end position="269"/>
    </location>
</feature>
<feature type="region of interest" description="Disordered" evidence="2">
    <location>
        <begin position="1"/>
        <end position="20"/>
    </location>
</feature>
<feature type="region of interest" description="Disordered" evidence="2">
    <location>
        <begin position="249"/>
        <end position="269"/>
    </location>
</feature>
<accession>B6DDU1</accession>